<evidence type="ECO:0000255" key="1">
    <source>
        <dbReference type="HAMAP-Rule" id="MF_00155"/>
    </source>
</evidence>
<name>COXZ_RICBR</name>
<comment type="function">
    <text evidence="1">Exerts its effect at some terminal stage of cytochrome c oxidase synthesis, probably by being involved in the insertion of the copper B into subunit I.</text>
</comment>
<comment type="subcellular location">
    <subcellularLocation>
        <location evidence="1">Cell inner membrane</location>
        <topology evidence="1">Single-pass type II membrane protein</topology>
        <orientation evidence="1">Periplasmic side</orientation>
    </subcellularLocation>
</comment>
<comment type="similarity">
    <text evidence="1">Belongs to the COX11/CtaG family.</text>
</comment>
<protein>
    <recommendedName>
        <fullName evidence="1">Cytochrome c oxidase assembly protein CtaG</fullName>
    </recommendedName>
</protein>
<dbReference type="EMBL" id="CP000087">
    <property type="protein sequence ID" value="ABE04608.1"/>
    <property type="molecule type" value="Genomic_DNA"/>
</dbReference>
<dbReference type="RefSeq" id="WP_011477199.1">
    <property type="nucleotide sequence ID" value="NC_007940.1"/>
</dbReference>
<dbReference type="SMR" id="Q1RJ56"/>
<dbReference type="KEGG" id="rbe:RBE_0527"/>
<dbReference type="eggNOG" id="COG3175">
    <property type="taxonomic scope" value="Bacteria"/>
</dbReference>
<dbReference type="HOGENOM" id="CLU_045000_5_0_5"/>
<dbReference type="OrthoDB" id="9804841at2"/>
<dbReference type="Proteomes" id="UP000001951">
    <property type="component" value="Chromosome"/>
</dbReference>
<dbReference type="GO" id="GO:0005886">
    <property type="term" value="C:plasma membrane"/>
    <property type="evidence" value="ECO:0007669"/>
    <property type="project" value="UniProtKB-SubCell"/>
</dbReference>
<dbReference type="GO" id="GO:0005507">
    <property type="term" value="F:copper ion binding"/>
    <property type="evidence" value="ECO:0007669"/>
    <property type="project" value="InterPro"/>
</dbReference>
<dbReference type="GO" id="GO:0008535">
    <property type="term" value="P:respiratory chain complex IV assembly"/>
    <property type="evidence" value="ECO:0007669"/>
    <property type="project" value="UniProtKB-UniRule"/>
</dbReference>
<dbReference type="FunFam" id="2.60.370.10:FF:000001">
    <property type="entry name" value="COX11 cytochrome c oxidase assembly homolog"/>
    <property type="match status" value="1"/>
</dbReference>
<dbReference type="Gene3D" id="2.60.370.10">
    <property type="entry name" value="Ctag/Cox11"/>
    <property type="match status" value="1"/>
</dbReference>
<dbReference type="HAMAP" id="MF_00155">
    <property type="entry name" value="CtaG"/>
    <property type="match status" value="1"/>
</dbReference>
<dbReference type="InterPro" id="IPR023471">
    <property type="entry name" value="CtaG/Cox11_dom_sf"/>
</dbReference>
<dbReference type="InterPro" id="IPR007533">
    <property type="entry name" value="Cyt_c_oxidase_assmbl_CtaG"/>
</dbReference>
<dbReference type="NCBIfam" id="NF003465">
    <property type="entry name" value="PRK05089.1"/>
    <property type="match status" value="1"/>
</dbReference>
<dbReference type="PANTHER" id="PTHR21320:SF3">
    <property type="entry name" value="CYTOCHROME C OXIDASE ASSEMBLY PROTEIN COX11, MITOCHONDRIAL-RELATED"/>
    <property type="match status" value="1"/>
</dbReference>
<dbReference type="PANTHER" id="PTHR21320">
    <property type="entry name" value="CYTOCHROME C OXIDASE ASSEMBLY PROTEIN COX11-RELATED"/>
    <property type="match status" value="1"/>
</dbReference>
<dbReference type="Pfam" id="PF04442">
    <property type="entry name" value="CtaG_Cox11"/>
    <property type="match status" value="1"/>
</dbReference>
<dbReference type="PIRSF" id="PIRSF005413">
    <property type="entry name" value="COX11"/>
    <property type="match status" value="1"/>
</dbReference>
<dbReference type="SUPFAM" id="SSF110111">
    <property type="entry name" value="Ctag/Cox11"/>
    <property type="match status" value="1"/>
</dbReference>
<sequence>MSKKSNKSLAFSLLGLIVSMVLLSFAAVPLYNLFCKVTGYGGTTNRETVSIYSKVKGTRPIIIEFDANVDKNLPWRFIPRQQRVQIVPGQNTLVFYETENLSDNDIIGTSIYNVTPNKAGKYFVKIHCFCFEEQLLKAGEKVLMPVTFYIDKDFENDPEMRDVKVLTLSYSFFKVRDVKK</sequence>
<reference key="1">
    <citation type="journal article" date="2006" name="PLoS Genet.">
        <title>Genome sequence of Rickettsia bellii illuminates the role of amoebae in gene exchanges between intracellular pathogens.</title>
        <authorList>
            <person name="Ogata H."/>
            <person name="La Scola B."/>
            <person name="Audic S."/>
            <person name="Renesto P."/>
            <person name="Blanc G."/>
            <person name="Robert C."/>
            <person name="Fournier P.-E."/>
            <person name="Claverie J.-M."/>
            <person name="Raoult D."/>
        </authorList>
    </citation>
    <scope>NUCLEOTIDE SEQUENCE [LARGE SCALE GENOMIC DNA]</scope>
    <source>
        <strain>RML369-C</strain>
    </source>
</reference>
<accession>Q1RJ56</accession>
<gene>
    <name evidence="1" type="primary">ctaG</name>
    <name type="ordered locus">RBE_0527</name>
</gene>
<keyword id="KW-0997">Cell inner membrane</keyword>
<keyword id="KW-1003">Cell membrane</keyword>
<keyword id="KW-0186">Copper</keyword>
<keyword id="KW-0472">Membrane</keyword>
<keyword id="KW-0735">Signal-anchor</keyword>
<keyword id="KW-0812">Transmembrane</keyword>
<keyword id="KW-1133">Transmembrane helix</keyword>
<feature type="chain" id="PRO_0000246142" description="Cytochrome c oxidase assembly protein CtaG">
    <location>
        <begin position="1"/>
        <end position="180"/>
    </location>
</feature>
<feature type="topological domain" description="Cytoplasmic" evidence="1">
    <location>
        <begin position="1"/>
        <end position="8"/>
    </location>
</feature>
<feature type="transmembrane region" description="Helical; Signal-anchor for type II membrane protein" evidence="1">
    <location>
        <begin position="9"/>
        <end position="29"/>
    </location>
</feature>
<feature type="topological domain" description="Periplasmic" evidence="1">
    <location>
        <begin position="30"/>
        <end position="180"/>
    </location>
</feature>
<organism>
    <name type="scientific">Rickettsia bellii (strain RML369-C)</name>
    <dbReference type="NCBI Taxonomy" id="336407"/>
    <lineage>
        <taxon>Bacteria</taxon>
        <taxon>Pseudomonadati</taxon>
        <taxon>Pseudomonadota</taxon>
        <taxon>Alphaproteobacteria</taxon>
        <taxon>Rickettsiales</taxon>
        <taxon>Rickettsiaceae</taxon>
        <taxon>Rickettsieae</taxon>
        <taxon>Rickettsia</taxon>
        <taxon>belli group</taxon>
    </lineage>
</organism>
<proteinExistence type="inferred from homology"/>